<evidence type="ECO:0000255" key="1">
    <source>
        <dbReference type="HAMAP-Rule" id="MF_00111"/>
    </source>
</evidence>
<organism>
    <name type="scientific">Pseudomonas aeruginosa (strain LESB58)</name>
    <dbReference type="NCBI Taxonomy" id="557722"/>
    <lineage>
        <taxon>Bacteria</taxon>
        <taxon>Pseudomonadati</taxon>
        <taxon>Pseudomonadota</taxon>
        <taxon>Gammaproteobacteria</taxon>
        <taxon>Pseudomonadales</taxon>
        <taxon>Pseudomonadaceae</taxon>
        <taxon>Pseudomonas</taxon>
    </lineage>
</organism>
<comment type="function">
    <text evidence="1">Cell wall formation. Adds enolpyruvyl to UDP-N-acetylglucosamine.</text>
</comment>
<comment type="catalytic activity">
    <reaction evidence="1">
        <text>phosphoenolpyruvate + UDP-N-acetyl-alpha-D-glucosamine = UDP-N-acetyl-3-O-(1-carboxyvinyl)-alpha-D-glucosamine + phosphate</text>
        <dbReference type="Rhea" id="RHEA:18681"/>
        <dbReference type="ChEBI" id="CHEBI:43474"/>
        <dbReference type="ChEBI" id="CHEBI:57705"/>
        <dbReference type="ChEBI" id="CHEBI:58702"/>
        <dbReference type="ChEBI" id="CHEBI:68483"/>
        <dbReference type="EC" id="2.5.1.7"/>
    </reaction>
</comment>
<comment type="pathway">
    <text evidence="1">Cell wall biogenesis; peptidoglycan biosynthesis.</text>
</comment>
<comment type="subcellular location">
    <subcellularLocation>
        <location evidence="1">Cytoplasm</location>
    </subcellularLocation>
</comment>
<comment type="similarity">
    <text evidence="1">Belongs to the EPSP synthase family. MurA subfamily.</text>
</comment>
<name>MURA_PSEA8</name>
<gene>
    <name evidence="1" type="primary">murA</name>
    <name type="ordered locus">PLES_48291</name>
</gene>
<accession>B7UZY9</accession>
<dbReference type="EC" id="2.5.1.7" evidence="1"/>
<dbReference type="EMBL" id="FM209186">
    <property type="protein sequence ID" value="CAW29583.1"/>
    <property type="molecule type" value="Genomic_DNA"/>
</dbReference>
<dbReference type="RefSeq" id="WP_003094332.1">
    <property type="nucleotide sequence ID" value="NC_011770.1"/>
</dbReference>
<dbReference type="SMR" id="B7UZY9"/>
<dbReference type="KEGG" id="pag:PLES_48291"/>
<dbReference type="HOGENOM" id="CLU_027387_0_0_6"/>
<dbReference type="UniPathway" id="UPA00219"/>
<dbReference type="GO" id="GO:0005737">
    <property type="term" value="C:cytoplasm"/>
    <property type="evidence" value="ECO:0007669"/>
    <property type="project" value="UniProtKB-SubCell"/>
</dbReference>
<dbReference type="GO" id="GO:0008760">
    <property type="term" value="F:UDP-N-acetylglucosamine 1-carboxyvinyltransferase activity"/>
    <property type="evidence" value="ECO:0007669"/>
    <property type="project" value="UniProtKB-UniRule"/>
</dbReference>
<dbReference type="GO" id="GO:0051301">
    <property type="term" value="P:cell division"/>
    <property type="evidence" value="ECO:0007669"/>
    <property type="project" value="UniProtKB-KW"/>
</dbReference>
<dbReference type="GO" id="GO:0071555">
    <property type="term" value="P:cell wall organization"/>
    <property type="evidence" value="ECO:0007669"/>
    <property type="project" value="UniProtKB-KW"/>
</dbReference>
<dbReference type="GO" id="GO:0009252">
    <property type="term" value="P:peptidoglycan biosynthetic process"/>
    <property type="evidence" value="ECO:0007669"/>
    <property type="project" value="UniProtKB-UniRule"/>
</dbReference>
<dbReference type="GO" id="GO:0008360">
    <property type="term" value="P:regulation of cell shape"/>
    <property type="evidence" value="ECO:0007669"/>
    <property type="project" value="UniProtKB-KW"/>
</dbReference>
<dbReference type="GO" id="GO:0019277">
    <property type="term" value="P:UDP-N-acetylgalactosamine biosynthetic process"/>
    <property type="evidence" value="ECO:0007669"/>
    <property type="project" value="InterPro"/>
</dbReference>
<dbReference type="CDD" id="cd01555">
    <property type="entry name" value="UdpNAET"/>
    <property type="match status" value="1"/>
</dbReference>
<dbReference type="FunFam" id="3.65.10.10:FF:000002">
    <property type="entry name" value="UDP-N-acetylglucosamine 1-carboxyvinyltransferase"/>
    <property type="match status" value="1"/>
</dbReference>
<dbReference type="Gene3D" id="3.65.10.10">
    <property type="entry name" value="Enolpyruvate transferase domain"/>
    <property type="match status" value="2"/>
</dbReference>
<dbReference type="HAMAP" id="MF_00111">
    <property type="entry name" value="MurA"/>
    <property type="match status" value="1"/>
</dbReference>
<dbReference type="InterPro" id="IPR001986">
    <property type="entry name" value="Enolpyruvate_Tfrase_dom"/>
</dbReference>
<dbReference type="InterPro" id="IPR036968">
    <property type="entry name" value="Enolpyruvate_Tfrase_sf"/>
</dbReference>
<dbReference type="InterPro" id="IPR050068">
    <property type="entry name" value="MurA_subfamily"/>
</dbReference>
<dbReference type="InterPro" id="IPR013792">
    <property type="entry name" value="RNA3'P_cycl/enolpyr_Trfase_a/b"/>
</dbReference>
<dbReference type="InterPro" id="IPR005750">
    <property type="entry name" value="UDP_GlcNAc_COvinyl_MurA"/>
</dbReference>
<dbReference type="NCBIfam" id="TIGR01072">
    <property type="entry name" value="murA"/>
    <property type="match status" value="1"/>
</dbReference>
<dbReference type="NCBIfam" id="NF006873">
    <property type="entry name" value="PRK09369.1"/>
    <property type="match status" value="1"/>
</dbReference>
<dbReference type="PANTHER" id="PTHR43783">
    <property type="entry name" value="UDP-N-ACETYLGLUCOSAMINE 1-CARBOXYVINYLTRANSFERASE"/>
    <property type="match status" value="1"/>
</dbReference>
<dbReference type="PANTHER" id="PTHR43783:SF1">
    <property type="entry name" value="UDP-N-ACETYLGLUCOSAMINE 1-CARBOXYVINYLTRANSFERASE"/>
    <property type="match status" value="1"/>
</dbReference>
<dbReference type="Pfam" id="PF00275">
    <property type="entry name" value="EPSP_synthase"/>
    <property type="match status" value="1"/>
</dbReference>
<dbReference type="SUPFAM" id="SSF55205">
    <property type="entry name" value="EPT/RTPC-like"/>
    <property type="match status" value="1"/>
</dbReference>
<protein>
    <recommendedName>
        <fullName evidence="1">UDP-N-acetylglucosamine 1-carboxyvinyltransferase</fullName>
        <ecNumber evidence="1">2.5.1.7</ecNumber>
    </recommendedName>
    <alternativeName>
        <fullName evidence="1">Enoylpyruvate transferase</fullName>
    </alternativeName>
    <alternativeName>
        <fullName evidence="1">UDP-N-acetylglucosamine enolpyruvyl transferase</fullName>
        <shortName evidence="1">EPT</shortName>
    </alternativeName>
</protein>
<sequence length="421" mass="44646">MDKLIITGGNRLDGEIRISGAKNSALPILAATLLADTPVTVCNLPHLHDITTMIELFGRMGVQPIIDEKLNVEVDASSIKTLVAPYELVKTMRASILVLGPMLARFGEAEVALPGGCAIGSRPVDLHIRGLEAMGAQIEVEGGYIKAKAPAGGLRGGHFFFDTVSVTGTENLMMAAALANGRTVLQNAAREPEVVDLANCLNAMGANVQGAGSDTIVIEGVKRLGGARYDVLPDRIETGTYLVAAAATGGRVKLKDTDPTILEAVLQKLEEAGAHISTGSNWIELDMKGNRPKAVNVRTAPYPAFPTDMQAQFISMNAVAEGTGAVIETVFENRFMHVYEMNRMGAQILVEGNTAIVTGVPKLKGAPVMATDLRASASLVIAGLVAEGDTLIDRIYHIDRGYECIEEKLQLLGAKIRRVPG</sequence>
<feature type="chain" id="PRO_1000117511" description="UDP-N-acetylglucosamine 1-carboxyvinyltransferase">
    <location>
        <begin position="1"/>
        <end position="421"/>
    </location>
</feature>
<feature type="active site" description="Proton donor" evidence="1">
    <location>
        <position position="117"/>
    </location>
</feature>
<feature type="binding site" evidence="1">
    <location>
        <begin position="22"/>
        <end position="23"/>
    </location>
    <ligand>
        <name>phosphoenolpyruvate</name>
        <dbReference type="ChEBI" id="CHEBI:58702"/>
    </ligand>
</feature>
<feature type="binding site" evidence="1">
    <location>
        <position position="93"/>
    </location>
    <ligand>
        <name>UDP-N-acetyl-alpha-D-glucosamine</name>
        <dbReference type="ChEBI" id="CHEBI:57705"/>
    </ligand>
</feature>
<feature type="binding site" evidence="1">
    <location>
        <begin position="122"/>
        <end position="126"/>
    </location>
    <ligand>
        <name>UDP-N-acetyl-alpha-D-glucosamine</name>
        <dbReference type="ChEBI" id="CHEBI:57705"/>
    </ligand>
</feature>
<feature type="binding site" evidence="1">
    <location>
        <position position="308"/>
    </location>
    <ligand>
        <name>UDP-N-acetyl-alpha-D-glucosamine</name>
        <dbReference type="ChEBI" id="CHEBI:57705"/>
    </ligand>
</feature>
<feature type="binding site" evidence="1">
    <location>
        <position position="330"/>
    </location>
    <ligand>
        <name>UDP-N-acetyl-alpha-D-glucosamine</name>
        <dbReference type="ChEBI" id="CHEBI:57705"/>
    </ligand>
</feature>
<feature type="modified residue" description="2-(S-cysteinyl)pyruvic acid O-phosphothioketal" evidence="1">
    <location>
        <position position="117"/>
    </location>
</feature>
<proteinExistence type="inferred from homology"/>
<keyword id="KW-0131">Cell cycle</keyword>
<keyword id="KW-0132">Cell division</keyword>
<keyword id="KW-0133">Cell shape</keyword>
<keyword id="KW-0961">Cell wall biogenesis/degradation</keyword>
<keyword id="KW-0963">Cytoplasm</keyword>
<keyword id="KW-0573">Peptidoglycan synthesis</keyword>
<keyword id="KW-0670">Pyruvate</keyword>
<keyword id="KW-0808">Transferase</keyword>
<reference key="1">
    <citation type="journal article" date="2009" name="Genome Res.">
        <title>Newly introduced genomic prophage islands are critical determinants of in vivo competitiveness in the Liverpool epidemic strain of Pseudomonas aeruginosa.</title>
        <authorList>
            <person name="Winstanley C."/>
            <person name="Langille M.G.I."/>
            <person name="Fothergill J.L."/>
            <person name="Kukavica-Ibrulj I."/>
            <person name="Paradis-Bleau C."/>
            <person name="Sanschagrin F."/>
            <person name="Thomson N.R."/>
            <person name="Winsor G.L."/>
            <person name="Quail M.A."/>
            <person name="Lennard N."/>
            <person name="Bignell A."/>
            <person name="Clarke L."/>
            <person name="Seeger K."/>
            <person name="Saunders D."/>
            <person name="Harris D."/>
            <person name="Parkhill J."/>
            <person name="Hancock R.E.W."/>
            <person name="Brinkman F.S.L."/>
            <person name="Levesque R.C."/>
        </authorList>
    </citation>
    <scope>NUCLEOTIDE SEQUENCE [LARGE SCALE GENOMIC DNA]</scope>
    <source>
        <strain>LESB58</strain>
    </source>
</reference>